<sequence length="443" mass="48893">MSTSDSIVSSQTKQSSWRKSDTTWTLGLFGTAIGAGVLFFPIRAGFGGLIPILLMLVLAYPIAFYCHRALARLCLSGSNPSGNITETVEEHFGKTGGVVITFLYFFAICPLLWIYGVTITNTFMTFWENQLGFAPLNRGFVALFLLLLMAFVIWFGKDLMVKVMSYLVWPFIASLVLISLSLIPYWNSAVIDQVDLGSLSLTGHDGILITVWLGISIMVFSFNFSPIVSSFVVSKREEYEKDFGRDFTERKCSQIISRASMLMVAVVMFFAFSCLFTLSPANMAEAKAQNIPVLSYLANHFASMTGTKTTFAITLEYAASIIALVAIFKSFFGHYLGTLEGLNGLILKFGYKGDKTKVSLGKLNTLSMIFIMGSTWVVAYANPNILDLIEAMGAPIIASLLCLLPMYAIRKAPSLAKYRGRLDNVFVTVIGLLTILNIVYKLF</sequence>
<feature type="chain" id="PRO_1000087941" description="Threonine/serine transporter TdcC">
    <location>
        <begin position="1"/>
        <end position="443"/>
    </location>
</feature>
<feature type="transmembrane region" description="Helical" evidence="1">
    <location>
        <begin position="22"/>
        <end position="42"/>
    </location>
</feature>
<feature type="transmembrane region" description="Helical" evidence="1">
    <location>
        <begin position="44"/>
        <end position="64"/>
    </location>
</feature>
<feature type="transmembrane region" description="Helical" evidence="1">
    <location>
        <begin position="97"/>
        <end position="117"/>
    </location>
</feature>
<feature type="transmembrane region" description="Helical" evidence="1">
    <location>
        <begin position="140"/>
        <end position="160"/>
    </location>
</feature>
<feature type="transmembrane region" description="Helical" evidence="1">
    <location>
        <begin position="163"/>
        <end position="183"/>
    </location>
</feature>
<feature type="transmembrane region" description="Helical" evidence="1">
    <location>
        <begin position="207"/>
        <end position="227"/>
    </location>
</feature>
<feature type="transmembrane region" description="Helical" evidence="1">
    <location>
        <begin position="261"/>
        <end position="281"/>
    </location>
</feature>
<feature type="transmembrane region" description="Helical" evidence="1">
    <location>
        <begin position="311"/>
        <end position="331"/>
    </location>
</feature>
<feature type="transmembrane region" description="Helical" evidence="1">
    <location>
        <begin position="366"/>
        <end position="386"/>
    </location>
</feature>
<feature type="transmembrane region" description="Helical" evidence="1">
    <location>
        <begin position="389"/>
        <end position="409"/>
    </location>
</feature>
<feature type="transmembrane region" description="Helical" evidence="1">
    <location>
        <begin position="423"/>
        <end position="443"/>
    </location>
</feature>
<gene>
    <name evidence="1" type="primary">tdcC</name>
    <name type="ordered locus">EcolC_0582</name>
</gene>
<dbReference type="EMBL" id="CP000946">
    <property type="protein sequence ID" value="ACA76258.1"/>
    <property type="molecule type" value="Genomic_DNA"/>
</dbReference>
<dbReference type="RefSeq" id="WP_000107721.1">
    <property type="nucleotide sequence ID" value="NZ_MTFT01000027.1"/>
</dbReference>
<dbReference type="SMR" id="B1IRJ9"/>
<dbReference type="KEGG" id="ecl:EcolC_0582"/>
<dbReference type="HOGENOM" id="CLU_052043_1_1_6"/>
<dbReference type="GO" id="GO:0005886">
    <property type="term" value="C:plasma membrane"/>
    <property type="evidence" value="ECO:0007669"/>
    <property type="project" value="UniProtKB-SubCell"/>
</dbReference>
<dbReference type="GO" id="GO:0015194">
    <property type="term" value="F:L-serine transmembrane transporter activity"/>
    <property type="evidence" value="ECO:0007669"/>
    <property type="project" value="InterPro"/>
</dbReference>
<dbReference type="GO" id="GO:0015293">
    <property type="term" value="F:symporter activity"/>
    <property type="evidence" value="ECO:0007669"/>
    <property type="project" value="UniProtKB-UniRule"/>
</dbReference>
<dbReference type="GO" id="GO:0015565">
    <property type="term" value="F:threonine efflux transmembrane transporter activity"/>
    <property type="evidence" value="ECO:0007669"/>
    <property type="project" value="InterPro"/>
</dbReference>
<dbReference type="HAMAP" id="MF_01583">
    <property type="entry name" value="Thr_Ser_transp_TdcC"/>
    <property type="match status" value="1"/>
</dbReference>
<dbReference type="InterPro" id="IPR018227">
    <property type="entry name" value="Amino_acid_transport_2"/>
</dbReference>
<dbReference type="InterPro" id="IPR004694">
    <property type="entry name" value="Hydroxy_aa_transpt"/>
</dbReference>
<dbReference type="InterPro" id="IPR023726">
    <property type="entry name" value="Thr/Ser_transpt_TdcC"/>
</dbReference>
<dbReference type="NCBIfam" id="NF010152">
    <property type="entry name" value="PRK13629.1"/>
    <property type="match status" value="1"/>
</dbReference>
<dbReference type="NCBIfam" id="TIGR00814">
    <property type="entry name" value="stp"/>
    <property type="match status" value="1"/>
</dbReference>
<dbReference type="PANTHER" id="PTHR35334">
    <property type="entry name" value="SERINE TRANSPORTER"/>
    <property type="match status" value="1"/>
</dbReference>
<dbReference type="PANTHER" id="PTHR35334:SF1">
    <property type="entry name" value="THREONINE_SERINE TRANSPORTER TDCC"/>
    <property type="match status" value="1"/>
</dbReference>
<dbReference type="Pfam" id="PF03222">
    <property type="entry name" value="Trp_Tyr_perm"/>
    <property type="match status" value="1"/>
</dbReference>
<protein>
    <recommendedName>
        <fullName evidence="1">Threonine/serine transporter TdcC</fullName>
    </recommendedName>
    <alternativeName>
        <fullName evidence="1">H(+)/threonine-serine symporter</fullName>
    </alternativeName>
</protein>
<name>TDCC_ECOLC</name>
<proteinExistence type="inferred from homology"/>
<accession>B1IRJ9</accession>
<evidence type="ECO:0000255" key="1">
    <source>
        <dbReference type="HAMAP-Rule" id="MF_01583"/>
    </source>
</evidence>
<keyword id="KW-0029">Amino-acid transport</keyword>
<keyword id="KW-0997">Cell inner membrane</keyword>
<keyword id="KW-1003">Cell membrane</keyword>
<keyword id="KW-0472">Membrane</keyword>
<keyword id="KW-0769">Symport</keyword>
<keyword id="KW-0812">Transmembrane</keyword>
<keyword id="KW-1133">Transmembrane helix</keyword>
<keyword id="KW-0813">Transport</keyword>
<comment type="function">
    <text evidence="1">Involved in the import of threonine and serine into the cell, with the concomitant import of a proton (symport system).</text>
</comment>
<comment type="catalytic activity">
    <reaction evidence="1">
        <text>L-threonine(in) + H(+)(in) = L-threonine(out) + H(+)(out)</text>
        <dbReference type="Rhea" id="RHEA:28883"/>
        <dbReference type="ChEBI" id="CHEBI:15378"/>
        <dbReference type="ChEBI" id="CHEBI:57926"/>
    </reaction>
    <physiologicalReaction direction="right-to-left" evidence="1">
        <dbReference type="Rhea" id="RHEA:28885"/>
    </physiologicalReaction>
</comment>
<comment type="catalytic activity">
    <reaction evidence="1">
        <text>L-serine(in) + H(+)(in) = L-serine(out) + H(+)(out)</text>
        <dbReference type="Rhea" id="RHEA:28887"/>
        <dbReference type="ChEBI" id="CHEBI:15378"/>
        <dbReference type="ChEBI" id="CHEBI:33384"/>
    </reaction>
    <physiologicalReaction direction="right-to-left" evidence="1">
        <dbReference type="Rhea" id="RHEA:28889"/>
    </physiologicalReaction>
</comment>
<comment type="subcellular location">
    <subcellularLocation>
        <location evidence="1">Cell inner membrane</location>
        <topology evidence="1">Multi-pass membrane protein</topology>
    </subcellularLocation>
</comment>
<comment type="similarity">
    <text evidence="1">Belongs to the amino acid/polyamine transporter 2 family. SdaC/TdcC subfamily.</text>
</comment>
<reference key="1">
    <citation type="submission" date="2008-02" db="EMBL/GenBank/DDBJ databases">
        <title>Complete sequence of Escherichia coli C str. ATCC 8739.</title>
        <authorList>
            <person name="Copeland A."/>
            <person name="Lucas S."/>
            <person name="Lapidus A."/>
            <person name="Glavina del Rio T."/>
            <person name="Dalin E."/>
            <person name="Tice H."/>
            <person name="Bruce D."/>
            <person name="Goodwin L."/>
            <person name="Pitluck S."/>
            <person name="Kiss H."/>
            <person name="Brettin T."/>
            <person name="Detter J.C."/>
            <person name="Han C."/>
            <person name="Kuske C.R."/>
            <person name="Schmutz J."/>
            <person name="Larimer F."/>
            <person name="Land M."/>
            <person name="Hauser L."/>
            <person name="Kyrpides N."/>
            <person name="Mikhailova N."/>
            <person name="Ingram L."/>
            <person name="Richardson P."/>
        </authorList>
    </citation>
    <scope>NUCLEOTIDE SEQUENCE [LARGE SCALE GENOMIC DNA]</scope>
    <source>
        <strain>ATCC 8739 / DSM 1576 / NBRC 3972 / NCIMB 8545 / WDCM 00012 / Crooks</strain>
    </source>
</reference>
<organism>
    <name type="scientific">Escherichia coli (strain ATCC 8739 / DSM 1576 / NBRC 3972 / NCIMB 8545 / WDCM 00012 / Crooks)</name>
    <dbReference type="NCBI Taxonomy" id="481805"/>
    <lineage>
        <taxon>Bacteria</taxon>
        <taxon>Pseudomonadati</taxon>
        <taxon>Pseudomonadota</taxon>
        <taxon>Gammaproteobacteria</taxon>
        <taxon>Enterobacterales</taxon>
        <taxon>Enterobacteriaceae</taxon>
        <taxon>Escherichia</taxon>
    </lineage>
</organism>